<feature type="chain" id="PRO_1000019126" description="Probable molybdenum cofactor guanylyltransferase">
    <location>
        <begin position="1"/>
        <end position="201"/>
    </location>
</feature>
<feature type="binding site" evidence="1">
    <location>
        <begin position="16"/>
        <end position="18"/>
    </location>
    <ligand>
        <name>GTP</name>
        <dbReference type="ChEBI" id="CHEBI:37565"/>
    </ligand>
</feature>
<feature type="binding site" evidence="1">
    <location>
        <position position="28"/>
    </location>
    <ligand>
        <name>GTP</name>
        <dbReference type="ChEBI" id="CHEBI:37565"/>
    </ligand>
</feature>
<feature type="binding site" evidence="1">
    <location>
        <position position="75"/>
    </location>
    <ligand>
        <name>GTP</name>
        <dbReference type="ChEBI" id="CHEBI:37565"/>
    </ligand>
</feature>
<feature type="binding site" evidence="1">
    <location>
        <position position="107"/>
    </location>
    <ligand>
        <name>GTP</name>
        <dbReference type="ChEBI" id="CHEBI:37565"/>
    </ligand>
</feature>
<feature type="binding site" evidence="1">
    <location>
        <position position="107"/>
    </location>
    <ligand>
        <name>Mg(2+)</name>
        <dbReference type="ChEBI" id="CHEBI:18420"/>
    </ligand>
</feature>
<evidence type="ECO:0000255" key="1">
    <source>
        <dbReference type="HAMAP-Rule" id="MF_00316"/>
    </source>
</evidence>
<name>MOBA_MYCUA</name>
<dbReference type="EC" id="2.7.7.77" evidence="1"/>
<dbReference type="EMBL" id="CP000325">
    <property type="protein sequence ID" value="ABL05846.1"/>
    <property type="molecule type" value="Genomic_DNA"/>
</dbReference>
<dbReference type="RefSeq" id="WP_011741451.1">
    <property type="nucleotide sequence ID" value="NC_008611.1"/>
</dbReference>
<dbReference type="SMR" id="A0PU27"/>
<dbReference type="KEGG" id="mul:MUL_3724"/>
<dbReference type="eggNOG" id="COG0746">
    <property type="taxonomic scope" value="Bacteria"/>
</dbReference>
<dbReference type="HOGENOM" id="CLU_055597_3_2_11"/>
<dbReference type="Proteomes" id="UP000000765">
    <property type="component" value="Chromosome"/>
</dbReference>
<dbReference type="GO" id="GO:0005737">
    <property type="term" value="C:cytoplasm"/>
    <property type="evidence" value="ECO:0007669"/>
    <property type="project" value="UniProtKB-SubCell"/>
</dbReference>
<dbReference type="GO" id="GO:0005525">
    <property type="term" value="F:GTP binding"/>
    <property type="evidence" value="ECO:0007669"/>
    <property type="project" value="UniProtKB-UniRule"/>
</dbReference>
<dbReference type="GO" id="GO:0046872">
    <property type="term" value="F:metal ion binding"/>
    <property type="evidence" value="ECO:0007669"/>
    <property type="project" value="UniProtKB-KW"/>
</dbReference>
<dbReference type="GO" id="GO:0061603">
    <property type="term" value="F:molybdenum cofactor guanylyltransferase activity"/>
    <property type="evidence" value="ECO:0007669"/>
    <property type="project" value="UniProtKB-EC"/>
</dbReference>
<dbReference type="GO" id="GO:0006777">
    <property type="term" value="P:Mo-molybdopterin cofactor biosynthetic process"/>
    <property type="evidence" value="ECO:0007669"/>
    <property type="project" value="UniProtKB-KW"/>
</dbReference>
<dbReference type="CDD" id="cd02503">
    <property type="entry name" value="MobA"/>
    <property type="match status" value="1"/>
</dbReference>
<dbReference type="Gene3D" id="3.90.550.10">
    <property type="entry name" value="Spore Coat Polysaccharide Biosynthesis Protein SpsA, Chain A"/>
    <property type="match status" value="1"/>
</dbReference>
<dbReference type="HAMAP" id="MF_00316">
    <property type="entry name" value="MobA"/>
    <property type="match status" value="1"/>
</dbReference>
<dbReference type="InterPro" id="IPR025877">
    <property type="entry name" value="MobA-like_NTP_Trfase"/>
</dbReference>
<dbReference type="InterPro" id="IPR013482">
    <property type="entry name" value="Molybde_CF_guanTrfase"/>
</dbReference>
<dbReference type="InterPro" id="IPR029044">
    <property type="entry name" value="Nucleotide-diphossugar_trans"/>
</dbReference>
<dbReference type="NCBIfam" id="NF001855">
    <property type="entry name" value="PRK00576.1"/>
    <property type="match status" value="1"/>
</dbReference>
<dbReference type="PANTHER" id="PTHR19136">
    <property type="entry name" value="MOLYBDENUM COFACTOR GUANYLYLTRANSFERASE"/>
    <property type="match status" value="1"/>
</dbReference>
<dbReference type="PANTHER" id="PTHR19136:SF81">
    <property type="entry name" value="MOLYBDENUM COFACTOR GUANYLYLTRANSFERASE"/>
    <property type="match status" value="1"/>
</dbReference>
<dbReference type="Pfam" id="PF12804">
    <property type="entry name" value="NTP_transf_3"/>
    <property type="match status" value="1"/>
</dbReference>
<dbReference type="SUPFAM" id="SSF53448">
    <property type="entry name" value="Nucleotide-diphospho-sugar transferases"/>
    <property type="match status" value="1"/>
</dbReference>
<sequence length="201" mass="20956">MAGRESDAVSLAGVVLAGGESRRMGRDKATLVLPGGSTTMVEHVLGIVGQRCEPVFVMAAQGQPLPPLQVPVLRDELRGLGPLPATGRGLRAAAEAGARFAFVCAVDMPGLTVDLIDDLVRSAIETDAEVVLPWDGRSHYLAAIYRTDLAERVDALVAAGERKTSALADSSDTQRIVMSDSAPLANVNTAADLPAPVRPGH</sequence>
<comment type="function">
    <text evidence="1">Transfers a GMP moiety from GTP to Mo-molybdopterin (Mo-MPT) cofactor (Moco or molybdenum cofactor) to form Mo-molybdopterin guanine dinucleotide (Mo-MGD) cofactor.</text>
</comment>
<comment type="catalytic activity">
    <reaction evidence="1">
        <text>Mo-molybdopterin + GTP + H(+) = Mo-molybdopterin guanine dinucleotide + diphosphate</text>
        <dbReference type="Rhea" id="RHEA:34243"/>
        <dbReference type="ChEBI" id="CHEBI:15378"/>
        <dbReference type="ChEBI" id="CHEBI:33019"/>
        <dbReference type="ChEBI" id="CHEBI:37565"/>
        <dbReference type="ChEBI" id="CHEBI:71302"/>
        <dbReference type="ChEBI" id="CHEBI:71310"/>
        <dbReference type="EC" id="2.7.7.77"/>
    </reaction>
</comment>
<comment type="cofactor">
    <cofactor evidence="1">
        <name>Mg(2+)</name>
        <dbReference type="ChEBI" id="CHEBI:18420"/>
    </cofactor>
</comment>
<comment type="subcellular location">
    <subcellularLocation>
        <location evidence="1">Cytoplasm</location>
    </subcellularLocation>
</comment>
<comment type="domain">
    <text evidence="1">The N-terminal domain determines nucleotide recognition and specific binding, while the C-terminal domain determines the specific binding to the target protein.</text>
</comment>
<comment type="similarity">
    <text evidence="1">Belongs to the MobA family.</text>
</comment>
<proteinExistence type="inferred from homology"/>
<accession>A0PU27</accession>
<reference key="1">
    <citation type="journal article" date="2007" name="Genome Res.">
        <title>Reductive evolution and niche adaptation inferred from the genome of Mycobacterium ulcerans, the causative agent of Buruli ulcer.</title>
        <authorList>
            <person name="Stinear T.P."/>
            <person name="Seemann T."/>
            <person name="Pidot S."/>
            <person name="Frigui W."/>
            <person name="Reysset G."/>
            <person name="Garnier T."/>
            <person name="Meurice G."/>
            <person name="Simon D."/>
            <person name="Bouchier C."/>
            <person name="Ma L."/>
            <person name="Tichit M."/>
            <person name="Porter J.L."/>
            <person name="Ryan J."/>
            <person name="Johnson P.D.R."/>
            <person name="Davies J.K."/>
            <person name="Jenkin G.A."/>
            <person name="Small P.L.C."/>
            <person name="Jones L.M."/>
            <person name="Tekaia F."/>
            <person name="Laval F."/>
            <person name="Daffe M."/>
            <person name="Parkhill J."/>
            <person name="Cole S.T."/>
        </authorList>
    </citation>
    <scope>NUCLEOTIDE SEQUENCE [LARGE SCALE GENOMIC DNA]</scope>
    <source>
        <strain>Agy99</strain>
    </source>
</reference>
<gene>
    <name evidence="1" type="primary">mobA</name>
    <name type="ordered locus">MUL_3724</name>
</gene>
<keyword id="KW-0963">Cytoplasm</keyword>
<keyword id="KW-0342">GTP-binding</keyword>
<keyword id="KW-0460">Magnesium</keyword>
<keyword id="KW-0479">Metal-binding</keyword>
<keyword id="KW-0501">Molybdenum cofactor biosynthesis</keyword>
<keyword id="KW-0547">Nucleotide-binding</keyword>
<keyword id="KW-0808">Transferase</keyword>
<protein>
    <recommendedName>
        <fullName evidence="1">Probable molybdenum cofactor guanylyltransferase</fullName>
        <shortName evidence="1">MoCo guanylyltransferase</shortName>
        <ecNumber evidence="1">2.7.7.77</ecNumber>
    </recommendedName>
    <alternativeName>
        <fullName evidence="1">GTP:molybdopterin guanylyltransferase</fullName>
    </alternativeName>
    <alternativeName>
        <fullName evidence="1">Mo-MPT guanylyltransferase</fullName>
    </alternativeName>
    <alternativeName>
        <fullName evidence="1">Molybdopterin guanylyltransferase</fullName>
    </alternativeName>
    <alternativeName>
        <fullName evidence="1">Molybdopterin-guanine dinucleotide synthase</fullName>
        <shortName evidence="1">MGD synthase</shortName>
    </alternativeName>
</protein>
<organism>
    <name type="scientific">Mycobacterium ulcerans (strain Agy99)</name>
    <dbReference type="NCBI Taxonomy" id="362242"/>
    <lineage>
        <taxon>Bacteria</taxon>
        <taxon>Bacillati</taxon>
        <taxon>Actinomycetota</taxon>
        <taxon>Actinomycetes</taxon>
        <taxon>Mycobacteriales</taxon>
        <taxon>Mycobacteriaceae</taxon>
        <taxon>Mycobacterium</taxon>
        <taxon>Mycobacterium ulcerans group</taxon>
    </lineage>
</organism>